<proteinExistence type="evidence at protein level"/>
<evidence type="ECO:0000255" key="1">
    <source>
        <dbReference type="PROSITE-ProRule" id="PRU00411"/>
    </source>
</evidence>
<evidence type="ECO:0000269" key="2">
    <source>
    </source>
</evidence>
<evidence type="ECO:0000269" key="3">
    <source>
    </source>
</evidence>
<evidence type="ECO:0000269" key="4">
    <source>
    </source>
</evidence>
<evidence type="ECO:0000305" key="5"/>
<organism>
    <name type="scientific">Escherichia coli (strain K12)</name>
    <dbReference type="NCBI Taxonomy" id="83333"/>
    <lineage>
        <taxon>Bacteria</taxon>
        <taxon>Pseudomonadati</taxon>
        <taxon>Pseudomonadota</taxon>
        <taxon>Gammaproteobacteria</taxon>
        <taxon>Enterobacterales</taxon>
        <taxon>Enterobacteriaceae</taxon>
        <taxon>Escherichia</taxon>
    </lineage>
</organism>
<protein>
    <recommendedName>
        <fullName>Transcriptional activator protein BglJ</fullName>
    </recommendedName>
</protein>
<name>BGLJ_ECOLI</name>
<keyword id="KW-0010">Activator</keyword>
<keyword id="KW-0238">DNA-binding</keyword>
<keyword id="KW-1185">Reference proteome</keyword>
<keyword id="KW-0804">Transcription</keyword>
<keyword id="KW-0805">Transcription regulation</keyword>
<accession>P39404</accession>
<accession>Q2M5V0</accession>
<sequence length="225" mass="25622">MEHSRIKKRNVALIEKCVMSSIGIESLFRKFAGNPYKLHTYTSQESFQDAMSRISFAAVIFSFSAMRSERREGLSCLTELAIKFPRTRRLVIADDDIEARLIGSLSPSPLDGVLSKASTLEIFHQELFLSLNGVRQATDRLNNQWYINQSRTLSPTEREILRFMSRGYSMTQIAEQLKRNIKTIRAHKFNVMSKLGVSSDAGLLEAADILLCMRHCETSNVLHPY</sequence>
<gene>
    <name type="primary">bglJ</name>
    <name type="synonym">yjjR</name>
    <name type="ordered locus">b4366</name>
    <name type="ordered locus">JW5955</name>
</gene>
<comment type="function">
    <text evidence="4">A crytic transcriptional activator. When its expression is induced it relieves H-NS repression of the bgl operon. Acts independently of transcription factor LeuO.</text>
</comment>
<comment type="subunit">
    <text>Forms a complex with RcsB; genetically both BglJ and RcsB are required to relieve bgl operon repression by H-NS and by StpA.</text>
</comment>
<comment type="interaction">
    <interactant intactId="EBI-551429">
        <id>P39404</id>
    </interactant>
    <interactant intactId="EBI-369670">
        <id>P0DMC7</id>
        <label>rcsB</label>
    </interactant>
    <organismsDiffer>false</organismsDiffer>
    <experiments>4</experiments>
</comment>
<comment type="induction">
    <text evidence="2 3">Repressed by H-NS, activated by LeuO. Member of the yjjQ-bglJ operon.</text>
</comment>
<comment type="sequence caution" evidence="5">
    <conflict type="erroneous initiation">
        <sequence resource="EMBL-CDS" id="BAE78356"/>
    </conflict>
    <text>Truncated N-terminus.</text>
</comment>
<reference key="1">
    <citation type="journal article" date="1996" name="Genetics">
        <title>A mutation in a new gene, bglJ, activates the bgl operon in Escherichia coli K-12.</title>
        <authorList>
            <person name="Giel M."/>
            <person name="Desnoyer M."/>
            <person name="Lopilato J."/>
        </authorList>
    </citation>
    <scope>NUCLEOTIDE SEQUENCE [GENOMIC DNA]</scope>
    <scope>ROLE IN BGL OPERON EXPRESSION</scope>
    <source>
        <strain>K12 / MC4100 / ATCC 35695 / DSM 6574</strain>
    </source>
</reference>
<reference key="2">
    <citation type="journal article" date="1995" name="Nucleic Acids Res.">
        <title>Analysis of the Escherichia coli genome VI: DNA sequence of the region from 92.8 through 100 minutes.</title>
        <authorList>
            <person name="Burland V.D."/>
            <person name="Plunkett G. III"/>
            <person name="Sofia H.J."/>
            <person name="Daniels D.L."/>
            <person name="Blattner F.R."/>
        </authorList>
    </citation>
    <scope>NUCLEOTIDE SEQUENCE [LARGE SCALE GENOMIC DNA]</scope>
    <source>
        <strain>K12 / MG1655 / ATCC 47076</strain>
    </source>
</reference>
<reference key="3">
    <citation type="journal article" date="1997" name="Science">
        <title>The complete genome sequence of Escherichia coli K-12.</title>
        <authorList>
            <person name="Blattner F.R."/>
            <person name="Plunkett G. III"/>
            <person name="Bloch C.A."/>
            <person name="Perna N.T."/>
            <person name="Burland V."/>
            <person name="Riley M."/>
            <person name="Collado-Vides J."/>
            <person name="Glasner J.D."/>
            <person name="Rode C.K."/>
            <person name="Mayhew G.F."/>
            <person name="Gregor J."/>
            <person name="Davis N.W."/>
            <person name="Kirkpatrick H.A."/>
            <person name="Goeden M.A."/>
            <person name="Rose D.J."/>
            <person name="Mau B."/>
            <person name="Shao Y."/>
        </authorList>
    </citation>
    <scope>NUCLEOTIDE SEQUENCE [LARGE SCALE GENOMIC DNA]</scope>
    <source>
        <strain>K12 / MG1655 / ATCC 47076</strain>
    </source>
</reference>
<reference key="4">
    <citation type="journal article" date="2006" name="Mol. Syst. Biol.">
        <title>Highly accurate genome sequences of Escherichia coli K-12 strains MG1655 and W3110.</title>
        <authorList>
            <person name="Hayashi K."/>
            <person name="Morooka N."/>
            <person name="Yamamoto Y."/>
            <person name="Fujita K."/>
            <person name="Isono K."/>
            <person name="Choi S."/>
            <person name="Ohtsubo E."/>
            <person name="Baba T."/>
            <person name="Wanner B.L."/>
            <person name="Mori H."/>
            <person name="Horiuchi T."/>
        </authorList>
    </citation>
    <scope>NUCLEOTIDE SEQUENCE [LARGE SCALE GENOMIC DNA]</scope>
    <source>
        <strain>K12 / W3110 / ATCC 27325 / DSM 5911</strain>
    </source>
</reference>
<reference key="5">
    <citation type="journal article" date="2008" name="J. Bacteriol.">
        <title>Regulation of the yjjQ-bglJ operon, encoding LuxR-type transcription factors, and the divergent yjjP gene by H-NS and LeuO.</title>
        <authorList>
            <person name="Stratmann T."/>
            <person name="Madhusudan S."/>
            <person name="Schnetz K."/>
        </authorList>
    </citation>
    <scope>OPERON STRUCTURE</scope>
    <scope>INDUCTION</scope>
    <source>
        <strain>CSH50</strain>
    </source>
</reference>
<reference key="6">
    <citation type="journal article" date="2009" name="J. Bacteriol.">
        <title>Involvement of the leucine response transcription factor LeuO in regulation of the genes for sulfa drug efflux.</title>
        <authorList>
            <person name="Shimada T."/>
            <person name="Yamamoto K."/>
            <person name="Ishihama A."/>
        </authorList>
    </citation>
    <scope>OPERON STRUCTURE</scope>
    <scope>INDUCTION</scope>
    <source>
        <strain>K12 / BW25113</strain>
    </source>
</reference>
<reference key="7">
    <citation type="journal article" date="2010" name="J. Bacteriol.">
        <title>BglJ-RcsB heterodimers relieve repression of the Escherichia coli bgl operon by H-NS.</title>
        <authorList>
            <person name="Venkatesh G.R."/>
            <person name="Kembou Koungni F.C."/>
            <person name="Paukner A."/>
            <person name="Stratmann T."/>
            <person name="Blissenbach B."/>
            <person name="Schnetz K."/>
        </authorList>
    </citation>
    <scope>PROTEIN START SITE</scope>
    <scope>INTERACTION WITH RCSB</scope>
    <source>
        <strain>CSH50</strain>
    </source>
</reference>
<dbReference type="EMBL" id="U35834">
    <property type="protein sequence ID" value="AAB49332.1"/>
    <property type="molecule type" value="Genomic_DNA"/>
</dbReference>
<dbReference type="EMBL" id="U14003">
    <property type="protein sequence ID" value="AAA97265.1"/>
    <property type="molecule type" value="Genomic_DNA"/>
</dbReference>
<dbReference type="EMBL" id="U00096">
    <property type="protein sequence ID" value="AAC77322.4"/>
    <property type="molecule type" value="Genomic_DNA"/>
</dbReference>
<dbReference type="EMBL" id="AP009048">
    <property type="protein sequence ID" value="BAE78356.1"/>
    <property type="status" value="ALT_INIT"/>
    <property type="molecule type" value="Genomic_DNA"/>
</dbReference>
<dbReference type="RefSeq" id="NP_418786.4">
    <property type="nucleotide sequence ID" value="NC_000913.3"/>
</dbReference>
<dbReference type="RefSeq" id="WP_001301727.1">
    <property type="nucleotide sequence ID" value="NZ_STEB01000025.1"/>
</dbReference>
<dbReference type="SMR" id="P39404"/>
<dbReference type="BioGRID" id="4262783">
    <property type="interactions" value="188"/>
</dbReference>
<dbReference type="ComplexPortal" id="CPX-5763">
    <property type="entry name" value="bglJ-rcsB DNA-binding transcription factor complex"/>
</dbReference>
<dbReference type="DIP" id="DIP-9217N"/>
<dbReference type="FunCoup" id="P39404">
    <property type="interactions" value="17"/>
</dbReference>
<dbReference type="IntAct" id="P39404">
    <property type="interactions" value="2"/>
</dbReference>
<dbReference type="STRING" id="511145.b4366"/>
<dbReference type="PaxDb" id="511145-b4366"/>
<dbReference type="EnsemblBacteria" id="AAC77322">
    <property type="protein sequence ID" value="AAC77322"/>
    <property type="gene ID" value="b4366"/>
</dbReference>
<dbReference type="GeneID" id="948889"/>
<dbReference type="KEGG" id="ecj:JW5955"/>
<dbReference type="KEGG" id="eco:b4366"/>
<dbReference type="KEGG" id="ecoc:C3026_23585"/>
<dbReference type="PATRIC" id="fig|1411691.4.peg.2320"/>
<dbReference type="EchoBASE" id="EB2479"/>
<dbReference type="eggNOG" id="COG2197">
    <property type="taxonomic scope" value="Bacteria"/>
</dbReference>
<dbReference type="HOGENOM" id="CLU_000445_90_6_6"/>
<dbReference type="InParanoid" id="P39404"/>
<dbReference type="OMA" id="FNAMTKL"/>
<dbReference type="OrthoDB" id="6623825at2"/>
<dbReference type="PhylomeDB" id="P39404"/>
<dbReference type="BioCyc" id="EcoCyc:G7948-MONOMER"/>
<dbReference type="PRO" id="PR:P39404"/>
<dbReference type="Proteomes" id="UP000000625">
    <property type="component" value="Chromosome"/>
</dbReference>
<dbReference type="GO" id="GO:0005667">
    <property type="term" value="C:transcription regulator complex"/>
    <property type="evidence" value="ECO:0000353"/>
    <property type="project" value="ComplexPortal"/>
</dbReference>
<dbReference type="GO" id="GO:0003677">
    <property type="term" value="F:DNA binding"/>
    <property type="evidence" value="ECO:0007669"/>
    <property type="project" value="UniProtKB-KW"/>
</dbReference>
<dbReference type="GO" id="GO:0003700">
    <property type="term" value="F:DNA-binding transcription factor activity"/>
    <property type="evidence" value="ECO:0000314"/>
    <property type="project" value="EcoCyc"/>
</dbReference>
<dbReference type="GO" id="GO:0045893">
    <property type="term" value="P:positive regulation of DNA-templated transcription"/>
    <property type="evidence" value="ECO:0000314"/>
    <property type="project" value="ComplexPortal"/>
</dbReference>
<dbReference type="GO" id="GO:0043470">
    <property type="term" value="P:regulation of carbohydrate catabolic process"/>
    <property type="evidence" value="ECO:0000314"/>
    <property type="project" value="ComplexPortal"/>
</dbReference>
<dbReference type="GO" id="GO:0009314">
    <property type="term" value="P:response to radiation"/>
    <property type="evidence" value="ECO:0000315"/>
    <property type="project" value="EcoCyc"/>
</dbReference>
<dbReference type="CDD" id="cd06170">
    <property type="entry name" value="LuxR_C_like"/>
    <property type="match status" value="1"/>
</dbReference>
<dbReference type="FunFam" id="1.10.10.10:FF:000540">
    <property type="entry name" value="DNA-binding transcriptional activator BglJ"/>
    <property type="match status" value="1"/>
</dbReference>
<dbReference type="Gene3D" id="1.10.10.10">
    <property type="entry name" value="Winged helix-like DNA-binding domain superfamily/Winged helix DNA-binding domain"/>
    <property type="match status" value="1"/>
</dbReference>
<dbReference type="InterPro" id="IPR016032">
    <property type="entry name" value="Sig_transdc_resp-reg_C-effctor"/>
</dbReference>
<dbReference type="InterPro" id="IPR000792">
    <property type="entry name" value="Tscrpt_reg_LuxR_C"/>
</dbReference>
<dbReference type="InterPro" id="IPR039420">
    <property type="entry name" value="WalR-like"/>
</dbReference>
<dbReference type="InterPro" id="IPR036388">
    <property type="entry name" value="WH-like_DNA-bd_sf"/>
</dbReference>
<dbReference type="NCBIfam" id="NF008548">
    <property type="entry name" value="PRK11475.1"/>
    <property type="match status" value="1"/>
</dbReference>
<dbReference type="PANTHER" id="PTHR43214:SF31">
    <property type="entry name" value="TRANSCRIPTIONAL ACTIVATOR PROTEIN BGLJ"/>
    <property type="match status" value="1"/>
</dbReference>
<dbReference type="PANTHER" id="PTHR43214">
    <property type="entry name" value="TWO-COMPONENT RESPONSE REGULATOR"/>
    <property type="match status" value="1"/>
</dbReference>
<dbReference type="Pfam" id="PF00196">
    <property type="entry name" value="GerE"/>
    <property type="match status" value="1"/>
</dbReference>
<dbReference type="PRINTS" id="PR00038">
    <property type="entry name" value="HTHLUXR"/>
</dbReference>
<dbReference type="SMART" id="SM00421">
    <property type="entry name" value="HTH_LUXR"/>
    <property type="match status" value="1"/>
</dbReference>
<dbReference type="SUPFAM" id="SSF46894">
    <property type="entry name" value="C-terminal effector domain of the bipartite response regulators"/>
    <property type="match status" value="1"/>
</dbReference>
<dbReference type="PROSITE" id="PS50043">
    <property type="entry name" value="HTH_LUXR_2"/>
    <property type="match status" value="1"/>
</dbReference>
<feature type="chain" id="PRO_0000184140" description="Transcriptional activator protein BglJ">
    <location>
        <begin position="1"/>
        <end position="225"/>
    </location>
</feature>
<feature type="domain" description="HTH luxR-type" evidence="1">
    <location>
        <begin position="146"/>
        <end position="211"/>
    </location>
</feature>
<feature type="DNA-binding region" description="H-T-H motif" evidence="1">
    <location>
        <begin position="170"/>
        <end position="189"/>
    </location>
</feature>